<gene>
    <name evidence="16" type="primary">RCC1L</name>
    <name evidence="10 11 12" type="synonym">WBSCR16</name>
</gene>
<protein>
    <recommendedName>
        <fullName>RCC1-like G exchanging factor-like protein</fullName>
        <shortName evidence="11">RCC1-like protein</shortName>
    </recommendedName>
    <alternativeName>
        <fullName evidence="11">Williams-Beuren syndrome chromosomal region 16 protein</fullName>
    </alternativeName>
</protein>
<keyword id="KW-0002">3D-structure</keyword>
<keyword id="KW-0025">Alternative splicing</keyword>
<keyword id="KW-0342">GTP-binding</keyword>
<keyword id="KW-0344">Guanine-nucleotide releasing factor</keyword>
<keyword id="KW-0472">Membrane</keyword>
<keyword id="KW-0496">Mitochondrion</keyword>
<keyword id="KW-0999">Mitochondrion inner membrane</keyword>
<keyword id="KW-0547">Nucleotide-binding</keyword>
<keyword id="KW-1267">Proteomics identification</keyword>
<keyword id="KW-1185">Reference proteome</keyword>
<keyword id="KW-0677">Repeat</keyword>
<keyword id="KW-0694">RNA-binding</keyword>
<keyword id="KW-0699">rRNA-binding</keyword>
<keyword id="KW-0809">Transit peptide</keyword>
<keyword id="KW-0856">Williams-Beuren syndrome</keyword>
<accession>Q96I51</accession>
<accession>D3DXK0</accession>
<accession>F5GX55</accession>
<accession>F5H6C7</accession>
<accession>Q548B1</accession>
<accession>Q8IW88</accession>
<accession>Q8N572</accession>
<accession>Q9H0G7</accession>
<feature type="transit peptide" description="Mitochondrion" evidence="7">
    <location>
        <begin position="1"/>
        <end position="37"/>
    </location>
</feature>
<feature type="chain" id="PRO_0000206656" description="RCC1-like G exchanging factor-like protein">
    <location>
        <begin position="38"/>
        <end position="464"/>
    </location>
</feature>
<feature type="repeat" description="RCC1 1" evidence="1 15">
    <location>
        <begin position="58"/>
        <end position="124"/>
    </location>
</feature>
<feature type="repeat" description="RCC1 2" evidence="1 15">
    <location>
        <begin position="128"/>
        <end position="191"/>
    </location>
</feature>
<feature type="repeat" description="RCC1 3" evidence="1 15">
    <location>
        <begin position="193"/>
        <end position="247"/>
    </location>
</feature>
<feature type="repeat" description="RCC1 4" evidence="1 15">
    <location>
        <begin position="248"/>
        <end position="300"/>
    </location>
</feature>
<feature type="repeat" description="RCC1 5" evidence="1 15">
    <location>
        <begin position="302"/>
        <end position="353"/>
    </location>
</feature>
<feature type="repeat" description="RCC1 6" evidence="1 15">
    <location>
        <begin position="354"/>
        <end position="411"/>
    </location>
</feature>
<feature type="repeat" description="RCC1 7" evidence="1 15">
    <location>
        <begin position="412"/>
        <end position="461"/>
    </location>
</feature>
<feature type="splice variant" id="VSP_055617" description="In isoform 2." evidence="9">
    <original>GEGHVF</original>
    <variation>DTWPQS</variation>
    <location>
        <begin position="353"/>
        <end position="358"/>
    </location>
</feature>
<feature type="splice variant" id="VSP_055618" description="In isoform 2." evidence="9">
    <location>
        <begin position="359"/>
        <end position="464"/>
    </location>
</feature>
<feature type="splice variant" id="VSP_055619" description="In isoform 3." evidence="9">
    <original>VTMPGEPVDVACGVDHMVTLAKSFI</original>
    <variation>APAPSASAKTTGPLL</variation>
    <location>
        <begin position="440"/>
        <end position="464"/>
    </location>
</feature>
<feature type="sequence variant" id="VAR_027972" description="In dbSNP:rs6955671." evidence="2 8">
    <original>G</original>
    <variation>R</variation>
    <location>
        <position position="30"/>
    </location>
</feature>
<feature type="mutagenesis site" description="Loss of mitochondrial localization." evidence="7">
    <location>
        <begin position="1"/>
        <end position="37"/>
    </location>
</feature>
<feature type="strand" evidence="17">
    <location>
        <begin position="60"/>
        <end position="66"/>
    </location>
</feature>
<feature type="helix" evidence="17">
    <location>
        <begin position="75"/>
        <end position="78"/>
    </location>
</feature>
<feature type="strand" evidence="17">
    <location>
        <begin position="79"/>
        <end position="81"/>
    </location>
</feature>
<feature type="strand" evidence="17">
    <location>
        <begin position="95"/>
        <end position="102"/>
    </location>
</feature>
<feature type="strand" evidence="17">
    <location>
        <begin position="109"/>
        <end position="114"/>
    </location>
</feature>
<feature type="strand" evidence="17">
    <location>
        <begin position="116"/>
        <end position="123"/>
    </location>
</feature>
<feature type="strand" evidence="17">
    <location>
        <begin position="126"/>
        <end position="128"/>
    </location>
</feature>
<feature type="strand" evidence="17">
    <location>
        <begin position="131"/>
        <end position="136"/>
    </location>
</feature>
<feature type="strand" evidence="17">
    <location>
        <begin position="156"/>
        <end position="163"/>
    </location>
</feature>
<feature type="turn" evidence="17">
    <location>
        <begin position="171"/>
        <end position="173"/>
    </location>
</feature>
<feature type="strand" evidence="17">
    <location>
        <begin position="176"/>
        <end position="181"/>
    </location>
</feature>
<feature type="strand" evidence="17">
    <location>
        <begin position="183"/>
        <end position="193"/>
    </location>
</feature>
<feature type="strand" evidence="17">
    <location>
        <begin position="195"/>
        <end position="199"/>
    </location>
</feature>
<feature type="strand" evidence="17">
    <location>
        <begin position="223"/>
        <end position="225"/>
    </location>
</feature>
<feature type="strand" evidence="17">
    <location>
        <begin position="228"/>
        <end position="230"/>
    </location>
</feature>
<feature type="strand" evidence="17">
    <location>
        <begin position="232"/>
        <end position="237"/>
    </location>
</feature>
<feature type="strand" evidence="17">
    <location>
        <begin position="239"/>
        <end position="246"/>
    </location>
</feature>
<feature type="strand" evidence="17">
    <location>
        <begin position="251"/>
        <end position="255"/>
    </location>
</feature>
<feature type="strand" evidence="17">
    <location>
        <begin position="264"/>
        <end position="268"/>
    </location>
</feature>
<feature type="strand" evidence="17">
    <location>
        <begin position="270"/>
        <end position="275"/>
    </location>
</feature>
<feature type="helix" evidence="17">
    <location>
        <begin position="278"/>
        <end position="280"/>
    </location>
</feature>
<feature type="strand" evidence="17">
    <location>
        <begin position="285"/>
        <end position="299"/>
    </location>
</feature>
<feature type="strand" evidence="17">
    <location>
        <begin position="304"/>
        <end position="309"/>
    </location>
</feature>
<feature type="turn" evidence="17">
    <location>
        <begin position="314"/>
        <end position="318"/>
    </location>
</feature>
<feature type="strand" evidence="17">
    <location>
        <begin position="322"/>
        <end position="329"/>
    </location>
</feature>
<feature type="turn" evidence="17">
    <location>
        <begin position="333"/>
        <end position="335"/>
    </location>
</feature>
<feature type="strand" evidence="17">
    <location>
        <begin position="337"/>
        <end position="343"/>
    </location>
</feature>
<feature type="strand" evidence="17">
    <location>
        <begin position="345"/>
        <end position="352"/>
    </location>
</feature>
<feature type="strand" evidence="17">
    <location>
        <begin position="357"/>
        <end position="363"/>
    </location>
</feature>
<feature type="strand" evidence="17">
    <location>
        <begin position="373"/>
        <end position="379"/>
    </location>
</feature>
<feature type="helix" evidence="17">
    <location>
        <begin position="382"/>
        <end position="385"/>
    </location>
</feature>
<feature type="strand" evidence="17">
    <location>
        <begin position="389"/>
        <end position="391"/>
    </location>
</feature>
<feature type="strand" evidence="17">
    <location>
        <begin position="396"/>
        <end position="401"/>
    </location>
</feature>
<feature type="strand" evidence="17">
    <location>
        <begin position="403"/>
        <end position="410"/>
    </location>
</feature>
<feature type="strand" evidence="17">
    <location>
        <begin position="415"/>
        <end position="419"/>
    </location>
</feature>
<feature type="turn" evidence="17">
    <location>
        <begin position="423"/>
        <end position="426"/>
    </location>
</feature>
<feature type="strand" evidence="17">
    <location>
        <begin position="428"/>
        <end position="430"/>
    </location>
</feature>
<feature type="strand" evidence="17">
    <location>
        <begin position="434"/>
        <end position="440"/>
    </location>
</feature>
<feature type="strand" evidence="17">
    <location>
        <begin position="443"/>
        <end position="451"/>
    </location>
</feature>
<feature type="strand" evidence="17">
    <location>
        <begin position="453"/>
        <end position="461"/>
    </location>
</feature>
<dbReference type="EMBL" id="AF410455">
    <property type="protein sequence ID" value="AAM62304.1"/>
    <property type="molecule type" value="mRNA"/>
</dbReference>
<dbReference type="EMBL" id="AL136804">
    <property type="protein sequence ID" value="CAB66738.1"/>
    <property type="molecule type" value="mRNA"/>
</dbReference>
<dbReference type="EMBL" id="AC124781">
    <property type="status" value="NOT_ANNOTATED_CDS"/>
    <property type="molecule type" value="Genomic_DNA"/>
</dbReference>
<dbReference type="EMBL" id="CH471292">
    <property type="protein sequence ID" value="EAW52090.1"/>
    <property type="molecule type" value="Genomic_DNA"/>
</dbReference>
<dbReference type="EMBL" id="CH471292">
    <property type="protein sequence ID" value="EAW52091.1"/>
    <property type="molecule type" value="Genomic_DNA"/>
</dbReference>
<dbReference type="EMBL" id="BC007823">
    <property type="protein sequence ID" value="AAH07823.1"/>
    <property type="molecule type" value="mRNA"/>
</dbReference>
<dbReference type="EMBL" id="BC019008">
    <property type="protein sequence ID" value="AAH19008.1"/>
    <property type="molecule type" value="mRNA"/>
</dbReference>
<dbReference type="EMBL" id="BC032712">
    <property type="protein sequence ID" value="AAH32712.1"/>
    <property type="molecule type" value="mRNA"/>
</dbReference>
<dbReference type="EMBL" id="BC040695">
    <property type="protein sequence ID" value="AAH40695.1"/>
    <property type="molecule type" value="mRNA"/>
</dbReference>
<dbReference type="CCDS" id="CCDS5577.1">
    <molecule id="Q96I51-1"/>
</dbReference>
<dbReference type="CCDS" id="CCDS64683.1">
    <molecule id="Q96I51-3"/>
</dbReference>
<dbReference type="CCDS" id="CCDS64684.1">
    <molecule id="Q96I51-2"/>
</dbReference>
<dbReference type="RefSeq" id="NP_001268370.1">
    <molecule id="Q96I51-2"/>
    <property type="nucleotide sequence ID" value="NM_001281441.2"/>
</dbReference>
<dbReference type="RefSeq" id="NP_110425.2">
    <molecule id="Q96I51-1"/>
    <property type="nucleotide sequence ID" value="NM_030798.5"/>
</dbReference>
<dbReference type="RefSeq" id="NP_683682.1">
    <molecule id="Q96I51-3"/>
    <property type="nucleotide sequence ID" value="NM_148842.3"/>
</dbReference>
<dbReference type="PDB" id="5XGS">
    <property type="method" value="X-ray"/>
    <property type="resolution" value="2.00 A"/>
    <property type="chains" value="A/B=32-464"/>
</dbReference>
<dbReference type="PDBsum" id="5XGS"/>
<dbReference type="SMR" id="Q96I51"/>
<dbReference type="BioGRID" id="123518">
    <property type="interactions" value="122"/>
</dbReference>
<dbReference type="CORUM" id="Q96I51"/>
<dbReference type="FunCoup" id="Q96I51">
    <property type="interactions" value="508"/>
</dbReference>
<dbReference type="IntAct" id="Q96I51">
    <property type="interactions" value="57"/>
</dbReference>
<dbReference type="MINT" id="Q96I51"/>
<dbReference type="STRING" id="9606.ENSP00000480364"/>
<dbReference type="iPTMnet" id="Q96I51"/>
<dbReference type="PhosphoSitePlus" id="Q96I51"/>
<dbReference type="SwissPalm" id="Q96I51"/>
<dbReference type="BioMuta" id="RCC1L"/>
<dbReference type="DMDM" id="116242843"/>
<dbReference type="jPOST" id="Q96I51"/>
<dbReference type="MassIVE" id="Q96I51"/>
<dbReference type="PaxDb" id="9606-ENSP00000480364"/>
<dbReference type="PeptideAtlas" id="Q96I51"/>
<dbReference type="ProteomicsDB" id="24317"/>
<dbReference type="ProteomicsDB" id="27147"/>
<dbReference type="ProteomicsDB" id="76812">
    <molecule id="Q96I51-1"/>
</dbReference>
<dbReference type="Pumba" id="Q96I51"/>
<dbReference type="Antibodypedia" id="73171">
    <property type="antibodies" value="106 antibodies from 19 providers"/>
</dbReference>
<dbReference type="DNASU" id="81554"/>
<dbReference type="Ensembl" id="ENST00000610322.5">
    <molecule id="Q96I51-1"/>
    <property type="protein sequence ID" value="ENSP00000480364.1"/>
    <property type="gene ID" value="ENSG00000274523.5"/>
</dbReference>
<dbReference type="Ensembl" id="ENST00000614461.4">
    <molecule id="Q96I51-3"/>
    <property type="protein sequence ID" value="ENSP00000477659.1"/>
    <property type="gene ID" value="ENSG00000274523.5"/>
</dbReference>
<dbReference type="Ensembl" id="ENST00000618035.4">
    <molecule id="Q96I51-2"/>
    <property type="protein sequence ID" value="ENSP00000480781.1"/>
    <property type="gene ID" value="ENSG00000274523.5"/>
</dbReference>
<dbReference type="GeneID" id="81554"/>
<dbReference type="KEGG" id="hsa:81554"/>
<dbReference type="MANE-Select" id="ENST00000610322.5">
    <property type="protein sequence ID" value="ENSP00000480364.1"/>
    <property type="RefSeq nucleotide sequence ID" value="NM_030798.5"/>
    <property type="RefSeq protein sequence ID" value="NP_110425.2"/>
</dbReference>
<dbReference type="UCSC" id="uc003ubr.5">
    <molecule id="Q96I51-1"/>
    <property type="organism name" value="human"/>
</dbReference>
<dbReference type="AGR" id="HGNC:14948"/>
<dbReference type="CTD" id="81554"/>
<dbReference type="DisGeNET" id="81554"/>
<dbReference type="GeneCards" id="RCC1L"/>
<dbReference type="HGNC" id="HGNC:14948">
    <property type="gene designation" value="RCC1L"/>
</dbReference>
<dbReference type="HPA" id="ENSG00000274523">
    <property type="expression patterns" value="Low tissue specificity"/>
</dbReference>
<dbReference type="MIM" id="194050">
    <property type="type" value="phenotype"/>
</dbReference>
<dbReference type="MIM" id="620739">
    <property type="type" value="gene"/>
</dbReference>
<dbReference type="neXtProt" id="NX_Q96I51"/>
<dbReference type="OpenTargets" id="ENSG00000274523"/>
<dbReference type="PharmGKB" id="PA37941"/>
<dbReference type="VEuPathDB" id="HostDB:ENSG00000274523"/>
<dbReference type="eggNOG" id="KOG1426">
    <property type="taxonomic scope" value="Eukaryota"/>
</dbReference>
<dbReference type="GeneTree" id="ENSGT00940000157317"/>
<dbReference type="HOGENOM" id="CLU_037900_0_0_1"/>
<dbReference type="InParanoid" id="Q96I51"/>
<dbReference type="OMA" id="GSFCMAL"/>
<dbReference type="OrthoDB" id="70707at2759"/>
<dbReference type="PAN-GO" id="Q96I51">
    <property type="GO annotations" value="5 GO annotations based on evolutionary models"/>
</dbReference>
<dbReference type="PhylomeDB" id="Q96I51"/>
<dbReference type="TreeFam" id="TF317425"/>
<dbReference type="PathwayCommons" id="Q96I51"/>
<dbReference type="SignaLink" id="Q96I51"/>
<dbReference type="BioGRID-ORCS" id="81554">
    <property type="hits" value="385 hits in 1160 CRISPR screens"/>
</dbReference>
<dbReference type="ChiTaRS" id="RCC1L">
    <property type="organism name" value="human"/>
</dbReference>
<dbReference type="GenomeRNAi" id="81554"/>
<dbReference type="Pharos" id="Q96I51">
    <property type="development level" value="Tbio"/>
</dbReference>
<dbReference type="PRO" id="PR:Q96I51"/>
<dbReference type="Proteomes" id="UP000005640">
    <property type="component" value="Chromosome 7"/>
</dbReference>
<dbReference type="RNAct" id="Q96I51">
    <property type="molecule type" value="protein"/>
</dbReference>
<dbReference type="Bgee" id="ENSG00000274523">
    <property type="expression patterns" value="Expressed in gastrocnemius and 181 other cell types or tissues"/>
</dbReference>
<dbReference type="ExpressionAtlas" id="Q96I51">
    <property type="expression patterns" value="baseline and differential"/>
</dbReference>
<dbReference type="GO" id="GO:0005743">
    <property type="term" value="C:mitochondrial inner membrane"/>
    <property type="evidence" value="ECO:0000314"/>
    <property type="project" value="UniProtKB"/>
</dbReference>
<dbReference type="GO" id="GO:0005759">
    <property type="term" value="C:mitochondrial matrix"/>
    <property type="evidence" value="ECO:0000314"/>
    <property type="project" value="FlyBase"/>
</dbReference>
<dbReference type="GO" id="GO:0031966">
    <property type="term" value="C:mitochondrial membrane"/>
    <property type="evidence" value="ECO:0000314"/>
    <property type="project" value="UniProtKB"/>
</dbReference>
<dbReference type="GO" id="GO:0005739">
    <property type="term" value="C:mitochondrion"/>
    <property type="evidence" value="ECO:0006056"/>
    <property type="project" value="FlyBase"/>
</dbReference>
<dbReference type="GO" id="GO:0005525">
    <property type="term" value="F:GTP binding"/>
    <property type="evidence" value="ECO:0007669"/>
    <property type="project" value="UniProtKB-KW"/>
</dbReference>
<dbReference type="GO" id="GO:0005085">
    <property type="term" value="F:guanyl-nucleotide exchange factor activity"/>
    <property type="evidence" value="ECO:0000314"/>
    <property type="project" value="UniProtKB"/>
</dbReference>
<dbReference type="GO" id="GO:0003723">
    <property type="term" value="F:RNA binding"/>
    <property type="evidence" value="ECO:0007005"/>
    <property type="project" value="UniProtKB"/>
</dbReference>
<dbReference type="GO" id="GO:0019843">
    <property type="term" value="F:rRNA binding"/>
    <property type="evidence" value="ECO:0000314"/>
    <property type="project" value="UniProtKB"/>
</dbReference>
<dbReference type="GO" id="GO:0008053">
    <property type="term" value="P:mitochondrial fusion"/>
    <property type="evidence" value="ECO:0000315"/>
    <property type="project" value="UniProtKB"/>
</dbReference>
<dbReference type="GO" id="GO:1902775">
    <property type="term" value="P:mitochondrial large ribosomal subunit assembly"/>
    <property type="evidence" value="ECO:0000315"/>
    <property type="project" value="UniProtKB"/>
</dbReference>
<dbReference type="GO" id="GO:0180026">
    <property type="term" value="P:mitochondrial small ribosomal subunit assembly"/>
    <property type="evidence" value="ECO:0000315"/>
    <property type="project" value="UniProtKB"/>
</dbReference>
<dbReference type="GO" id="GO:0070131">
    <property type="term" value="P:positive regulation of mitochondrial translation"/>
    <property type="evidence" value="ECO:0000318"/>
    <property type="project" value="GO_Central"/>
</dbReference>
<dbReference type="FunFam" id="2.130.10.30:FF:000024">
    <property type="entry name" value="RCC1-like G exchanging factor-like protein"/>
    <property type="match status" value="1"/>
</dbReference>
<dbReference type="FunFam" id="2.130.10.30:FF:000026">
    <property type="entry name" value="RCC1-like G exchanging factor-like protein"/>
    <property type="match status" value="1"/>
</dbReference>
<dbReference type="Gene3D" id="2.130.10.30">
    <property type="entry name" value="Regulator of chromosome condensation 1/beta-lactamase-inhibitor protein II"/>
    <property type="match status" value="2"/>
</dbReference>
<dbReference type="InterPro" id="IPR053035">
    <property type="entry name" value="Mitochondrial_GEF_domain"/>
</dbReference>
<dbReference type="InterPro" id="IPR009091">
    <property type="entry name" value="RCC1/BLIP-II"/>
</dbReference>
<dbReference type="InterPro" id="IPR000408">
    <property type="entry name" value="Reg_chr_condens"/>
</dbReference>
<dbReference type="PANTHER" id="PTHR46337">
    <property type="entry name" value="RCC1-LIKE G EXCHANGING FACTOR-LIKE PROTEIN"/>
    <property type="match status" value="1"/>
</dbReference>
<dbReference type="PANTHER" id="PTHR46337:SF1">
    <property type="entry name" value="RCC1-LIKE G EXCHANGING FACTOR-LIKE PROTEIN"/>
    <property type="match status" value="1"/>
</dbReference>
<dbReference type="Pfam" id="PF00415">
    <property type="entry name" value="RCC1"/>
    <property type="match status" value="1"/>
</dbReference>
<dbReference type="Pfam" id="PF25390">
    <property type="entry name" value="WD40_RLD"/>
    <property type="match status" value="1"/>
</dbReference>
<dbReference type="PRINTS" id="PR00633">
    <property type="entry name" value="RCCNDNSATION"/>
</dbReference>
<dbReference type="SUPFAM" id="SSF50985">
    <property type="entry name" value="RCC1/BLIP-II"/>
    <property type="match status" value="1"/>
</dbReference>
<dbReference type="PROSITE" id="PS00626">
    <property type="entry name" value="RCC1_2"/>
    <property type="match status" value="1"/>
</dbReference>
<dbReference type="PROSITE" id="PS50012">
    <property type="entry name" value="RCC1_3"/>
    <property type="match status" value="6"/>
</dbReference>
<proteinExistence type="evidence at protein level"/>
<evidence type="ECO:0000255" key="1"/>
<evidence type="ECO:0000269" key="2">
    <source>
    </source>
</evidence>
<evidence type="ECO:0000269" key="3">
    <source>
    </source>
</evidence>
<evidence type="ECO:0000269" key="4">
    <source>
    </source>
</evidence>
<evidence type="ECO:0000269" key="5">
    <source>
    </source>
</evidence>
<evidence type="ECO:0000269" key="6">
    <source>
    </source>
</evidence>
<evidence type="ECO:0000269" key="7">
    <source>
    </source>
</evidence>
<evidence type="ECO:0000269" key="8">
    <source ref="4"/>
</evidence>
<evidence type="ECO:0000303" key="9">
    <source>
    </source>
</evidence>
<evidence type="ECO:0000303" key="10">
    <source>
    </source>
</evidence>
<evidence type="ECO:0000303" key="11">
    <source>
    </source>
</evidence>
<evidence type="ECO:0000303" key="12">
    <source>
    </source>
</evidence>
<evidence type="ECO:0000303" key="13">
    <source>
    </source>
</evidence>
<evidence type="ECO:0000305" key="14">
    <source>
    </source>
</evidence>
<evidence type="ECO:0000305" key="15">
    <source>
    </source>
</evidence>
<evidence type="ECO:0000312" key="16">
    <source>
        <dbReference type="HGNC" id="HGNC:14948"/>
    </source>
</evidence>
<evidence type="ECO:0007829" key="17">
    <source>
        <dbReference type="PDB" id="5XGS"/>
    </source>
</evidence>
<reference key="1">
    <citation type="journal article" date="2002" name="Hum. Genet.">
        <title>Identification of additional transcripts in the Williams-Beuren syndrome critical region.</title>
        <authorList>
            <person name="Merla G."/>
            <person name="Ucla C."/>
            <person name="Guipponi M."/>
            <person name="Reymond A."/>
        </authorList>
    </citation>
    <scope>NUCLEOTIDE SEQUENCE [MRNA] (ISOFORM 1)</scope>
    <scope>TISSUE SPECIFICITY</scope>
</reference>
<reference key="2">
    <citation type="journal article" date="2001" name="Genome Res.">
        <title>Towards a catalog of human genes and proteins: sequencing and analysis of 500 novel complete protein coding human cDNAs.</title>
        <authorList>
            <person name="Wiemann S."/>
            <person name="Weil B."/>
            <person name="Wellenreuther R."/>
            <person name="Gassenhuber J."/>
            <person name="Glassl S."/>
            <person name="Ansorge W."/>
            <person name="Boecher M."/>
            <person name="Bloecker H."/>
            <person name="Bauersachs S."/>
            <person name="Blum H."/>
            <person name="Lauber J."/>
            <person name="Duesterhoeft A."/>
            <person name="Beyer A."/>
            <person name="Koehrer K."/>
            <person name="Strack N."/>
            <person name="Mewes H.-W."/>
            <person name="Ottenwaelder B."/>
            <person name="Obermaier B."/>
            <person name="Tampe J."/>
            <person name="Heubner D."/>
            <person name="Wambutt R."/>
            <person name="Korn B."/>
            <person name="Klein M."/>
            <person name="Poustka A."/>
        </authorList>
    </citation>
    <scope>NUCLEOTIDE SEQUENCE [LARGE SCALE MRNA] (ISOFORM 1)</scope>
    <scope>VARIANT ARG-30</scope>
    <source>
        <tissue>Testis</tissue>
    </source>
</reference>
<reference key="3">
    <citation type="journal article" date="2003" name="Nature">
        <title>The DNA sequence of human chromosome 7.</title>
        <authorList>
            <person name="Hillier L.W."/>
            <person name="Fulton R.S."/>
            <person name="Fulton L.A."/>
            <person name="Graves T.A."/>
            <person name="Pepin K.H."/>
            <person name="Wagner-McPherson C."/>
            <person name="Layman D."/>
            <person name="Maas J."/>
            <person name="Jaeger S."/>
            <person name="Walker R."/>
            <person name="Wylie K."/>
            <person name="Sekhon M."/>
            <person name="Becker M.C."/>
            <person name="O'Laughlin M.D."/>
            <person name="Schaller M.E."/>
            <person name="Fewell G.A."/>
            <person name="Delehaunty K.D."/>
            <person name="Miner T.L."/>
            <person name="Nash W.E."/>
            <person name="Cordes M."/>
            <person name="Du H."/>
            <person name="Sun H."/>
            <person name="Edwards J."/>
            <person name="Bradshaw-Cordum H."/>
            <person name="Ali J."/>
            <person name="Andrews S."/>
            <person name="Isak A."/>
            <person name="Vanbrunt A."/>
            <person name="Nguyen C."/>
            <person name="Du F."/>
            <person name="Lamar B."/>
            <person name="Courtney L."/>
            <person name="Kalicki J."/>
            <person name="Ozersky P."/>
            <person name="Bielicki L."/>
            <person name="Scott K."/>
            <person name="Holmes A."/>
            <person name="Harkins R."/>
            <person name="Harris A."/>
            <person name="Strong C.M."/>
            <person name="Hou S."/>
            <person name="Tomlinson C."/>
            <person name="Dauphin-Kohlberg S."/>
            <person name="Kozlowicz-Reilly A."/>
            <person name="Leonard S."/>
            <person name="Rohlfing T."/>
            <person name="Rock S.M."/>
            <person name="Tin-Wollam A.-M."/>
            <person name="Abbott A."/>
            <person name="Minx P."/>
            <person name="Maupin R."/>
            <person name="Strowmatt C."/>
            <person name="Latreille P."/>
            <person name="Miller N."/>
            <person name="Johnson D."/>
            <person name="Murray J."/>
            <person name="Woessner J.P."/>
            <person name="Wendl M.C."/>
            <person name="Yang S.-P."/>
            <person name="Schultz B.R."/>
            <person name="Wallis J.W."/>
            <person name="Spieth J."/>
            <person name="Bieri T.A."/>
            <person name="Nelson J.O."/>
            <person name="Berkowicz N."/>
            <person name="Wohldmann P.E."/>
            <person name="Cook L.L."/>
            <person name="Hickenbotham M.T."/>
            <person name="Eldred J."/>
            <person name="Williams D."/>
            <person name="Bedell J.A."/>
            <person name="Mardis E.R."/>
            <person name="Clifton S.W."/>
            <person name="Chissoe S.L."/>
            <person name="Marra M.A."/>
            <person name="Raymond C."/>
            <person name="Haugen E."/>
            <person name="Gillett W."/>
            <person name="Zhou Y."/>
            <person name="James R."/>
            <person name="Phelps K."/>
            <person name="Iadanoto S."/>
            <person name="Bubb K."/>
            <person name="Simms E."/>
            <person name="Levy R."/>
            <person name="Clendenning J."/>
            <person name="Kaul R."/>
            <person name="Kent W.J."/>
            <person name="Furey T.S."/>
            <person name="Baertsch R.A."/>
            <person name="Brent M.R."/>
            <person name="Keibler E."/>
            <person name="Flicek P."/>
            <person name="Bork P."/>
            <person name="Suyama M."/>
            <person name="Bailey J.A."/>
            <person name="Portnoy M.E."/>
            <person name="Torrents D."/>
            <person name="Chinwalla A.T."/>
            <person name="Gish W.R."/>
            <person name="Eddy S.R."/>
            <person name="McPherson J.D."/>
            <person name="Olson M.V."/>
            <person name="Eichler E.E."/>
            <person name="Green E.D."/>
            <person name="Waterston R.H."/>
            <person name="Wilson R.K."/>
        </authorList>
    </citation>
    <scope>NUCLEOTIDE SEQUENCE [LARGE SCALE GENOMIC DNA]</scope>
</reference>
<reference key="4">
    <citation type="submission" date="2005-09" db="EMBL/GenBank/DDBJ databases">
        <authorList>
            <person name="Mural R.J."/>
            <person name="Istrail S."/>
            <person name="Sutton G.G."/>
            <person name="Florea L."/>
            <person name="Halpern A.L."/>
            <person name="Mobarry C.M."/>
            <person name="Lippert R."/>
            <person name="Walenz B."/>
            <person name="Shatkay H."/>
            <person name="Dew I."/>
            <person name="Miller J.R."/>
            <person name="Flanigan M.J."/>
            <person name="Edwards N.J."/>
            <person name="Bolanos R."/>
            <person name="Fasulo D."/>
            <person name="Halldorsson B.V."/>
            <person name="Hannenhalli S."/>
            <person name="Turner R."/>
            <person name="Yooseph S."/>
            <person name="Lu F."/>
            <person name="Nusskern D.R."/>
            <person name="Shue B.C."/>
            <person name="Zheng X.H."/>
            <person name="Zhong F."/>
            <person name="Delcher A.L."/>
            <person name="Huson D.H."/>
            <person name="Kravitz S.A."/>
            <person name="Mouchard L."/>
            <person name="Reinert K."/>
            <person name="Remington K.A."/>
            <person name="Clark A.G."/>
            <person name="Waterman M.S."/>
            <person name="Eichler E.E."/>
            <person name="Adams M.D."/>
            <person name="Hunkapiller M.W."/>
            <person name="Myers E.W."/>
            <person name="Venter J.C."/>
        </authorList>
    </citation>
    <scope>NUCLEOTIDE SEQUENCE [LARGE SCALE GENOMIC DNA]</scope>
    <scope>VARIANT ARG-30</scope>
</reference>
<reference key="5">
    <citation type="journal article" date="2004" name="Genome Res.">
        <title>The status, quality, and expansion of the NIH full-length cDNA project: the Mammalian Gene Collection (MGC).</title>
        <authorList>
            <consortium name="The MGC Project Team"/>
        </authorList>
    </citation>
    <scope>NUCLEOTIDE SEQUENCE [LARGE SCALE MRNA] (ISOFORMS 1; 2 AND 3)</scope>
    <source>
        <tissue>Lymph</tissue>
        <tissue>Uterus</tissue>
    </source>
</reference>
<reference key="6">
    <citation type="journal article" date="2011" name="BMC Syst. Biol.">
        <title>Initial characterization of the human central proteome.</title>
        <authorList>
            <person name="Burkard T.R."/>
            <person name="Planyavsky M."/>
            <person name="Kaupe I."/>
            <person name="Breitwieser F.P."/>
            <person name="Buerckstuemmer T."/>
            <person name="Bennett K.L."/>
            <person name="Superti-Furga G."/>
            <person name="Colinge J."/>
        </authorList>
    </citation>
    <scope>IDENTIFICATION BY MASS SPECTROMETRY [LARGE SCALE ANALYSIS]</scope>
</reference>
<reference key="7">
    <citation type="journal article" date="2015" name="Proteomics">
        <title>N-terminome analysis of the human mitochondrial proteome.</title>
        <authorList>
            <person name="Vaca Jacome A.S."/>
            <person name="Rabilloud T."/>
            <person name="Schaeffer-Reiss C."/>
            <person name="Rompais M."/>
            <person name="Ayoub D."/>
            <person name="Lane L."/>
            <person name="Bairoch A."/>
            <person name="Van Dorsselaer A."/>
            <person name="Carapito C."/>
        </authorList>
    </citation>
    <scope>IDENTIFICATION BY MASS SPECTROMETRY [LARGE SCALE ANALYSIS]</scope>
</reference>
<reference key="8">
    <citation type="journal article" date="2016" name="Cell Metab.">
        <title>A Genome-wide CRISPR Death Screen Identifies Genes Essential for Oxidative Phosphorylation.</title>
        <authorList>
            <person name="Arroyo J.D."/>
            <person name="Jourdain A.A."/>
            <person name="Calvo S.E."/>
            <person name="Ballarano C.A."/>
            <person name="Doench J.G."/>
            <person name="Root D.E."/>
            <person name="Mootha V.K."/>
        </authorList>
    </citation>
    <scope>FUNCTION</scope>
    <scope>SUBUNIT</scope>
</reference>
<reference key="9">
    <citation type="journal article" date="2017" name="Cell Rep.">
        <title>WBSCR16 Is a Guanine Nucleotide Exchange Factor Important for Mitochondrial Fusion.</title>
        <authorList>
            <person name="Huang G."/>
            <person name="Massoudi D."/>
            <person name="Muir A.M."/>
            <person name="Joshi D.C."/>
            <person name="Zhang C.L."/>
            <person name="Chiu S.Y."/>
            <person name="Greenspan D.S."/>
        </authorList>
    </citation>
    <scope>FUNCTION</scope>
    <scope>SUBCELLULAR LOCATION</scope>
    <scope>SUBUNIT</scope>
</reference>
<reference key="10">
    <citation type="journal article" date="2020" name="PLoS Genet.">
        <title>RCC1L (WBSCR16) isoforms coordinate mitochondrial ribosome assembly through their interaction with GTPases.</title>
        <authorList>
            <person name="Reyes A."/>
            <person name="Favia P."/>
            <person name="Vidoni S."/>
            <person name="Petruzzella V."/>
            <person name="Zeviani M."/>
        </authorList>
    </citation>
    <scope>FUNCTION (ISOFORMS 1; 2 AND 3)</scope>
    <scope>SUBCELLULAR LOCATION (ISOFORMS 1; 2 AND 3)</scope>
    <scope>ASSOCIATION WITH MITOCHONDRIAL RIBOSOME LARGE SUBUNIT (ISOFORM 1)</scope>
    <scope>ASSOCIATION WITH MITOCHONDRIAL RIBOSOME SMALL SUBUNIT (ISOFORM 3)</scope>
    <scope>MUTAGENESIS OF 1-MET--GLU-37</scope>
</reference>
<reference key="11">
    <citation type="journal article" date="2017" name="Protein Sci.">
        <title>Crystal structure of human WBSCR16, an RCC1-like protein in mitochondria.</title>
        <authorList>
            <person name="Koyama M."/>
            <person name="Sasaki T."/>
            <person name="Sasaki N."/>
            <person name="Matsuura Y."/>
        </authorList>
    </citation>
    <scope>X-RAY CRYSTALLOGRAPHY (2.00 ANGSTROMS) OF 32-464</scope>
    <scope>DOMAIN</scope>
    <scope>SUBCELLULAR LOCATION</scope>
</reference>
<organism>
    <name type="scientific">Homo sapiens</name>
    <name type="common">Human</name>
    <dbReference type="NCBI Taxonomy" id="9606"/>
    <lineage>
        <taxon>Eukaryota</taxon>
        <taxon>Metazoa</taxon>
        <taxon>Chordata</taxon>
        <taxon>Craniata</taxon>
        <taxon>Vertebrata</taxon>
        <taxon>Euteleostomi</taxon>
        <taxon>Mammalia</taxon>
        <taxon>Eutheria</taxon>
        <taxon>Euarchontoglires</taxon>
        <taxon>Primates</taxon>
        <taxon>Haplorrhini</taxon>
        <taxon>Catarrhini</taxon>
        <taxon>Hominidae</taxon>
        <taxon>Homo</taxon>
    </lineage>
</organism>
<sequence length="464" mass="49898">MALVALVAGARLGRRLSGPGLGRGHWTAAGRSRSRREAAEAEAEVPVVQYVGERAARADRVFVWGFSFSGALGVPSFVVPSSGPGPRAGARPRRRIQPVPYRLELDQKISSAACGYGFTLLSSKTADVTKVWGMGLNKDSQLGFHRSRKDKTRGYEYVLEPSPVSLPLDRPQETRVLQVSCGRAHSLVLTDREGVFSMGNNSYGQCGRKVVENEIYSESHRVHRMQDFDGQVVQVACGQDHSLFLTDKGEVYSCGWGADGQTGLGHYNITSSPTKLGGDLAGVNVIQVATYGDCCLAVSADGGLFGWGNSEYLQLASVTDSTQVNVPRCLHFSGVGKVRQAACGGTGCAVLNGEGHVFVWGYGILGKGPNLVESAVPEMIPPTLFGLTEFNPEIQVSRIRCGLSHFAALTNKGELFVWGKNIRGCLGIGRLEDQYFPWRVTMPGEPVDVACGVDHMVTLAKSFI</sequence>
<comment type="function">
    <text evidence="4 6">Guanine nucleotide exchange factor (GEF) for mitochondrial dynamin-related GTPase OPA1. Activates OPA1, by exchanging bound GDP for free GTP, and drives OPA1 and MFN1-dependent mitochondrial fusion (PubMed:28746876). Plays an essential role in mitochondrial ribosome biogenesis. As a component of a functional protein-RNA module, consisting of RCC1L, NGRN, RPUSD3, RPUSD4, TRUB2, FASTKD2 and 16S mitochondrial ribosomal RNA (16S mt-rRNA), controls 16S mt-rRNA abundance and is required for intra-mitochondrial translation of core subunits of the oxidative phosphorylation system (PubMed:27667664).</text>
</comment>
<comment type="function">
    <molecule>Isoform 1</molecule>
    <text evidence="7">Plays an essential role in mitochondrial ribosome biogenesis via its association with GTPases that play a role in the assembly of the large ribosome subunit.</text>
</comment>
<comment type="function">
    <molecule>Isoform 2</molecule>
    <text evidence="7">Plays an essential role in mitochondrial ribosome biogenesis via its association with GTPases that play a role in the assembly of the small ribosome subunit.</text>
</comment>
<comment type="subunit">
    <text evidence="4 6">Forms a regulatory protein-RNA complex, consisting of RCC1L, NGRN, RPUSD3, RPUSD4, TRUB2, FASTKD2 and 16S mt-rRNA. Interacts with 16S mt-rRNA; this interaction is direct (PubMed:27667664). Interacts with OPA1; this interaction is direct (PubMed:28746876).</text>
</comment>
<comment type="subunit">
    <molecule>Isoform 1</molecule>
    <text evidence="7">Asociates with the mitochondrial ribosome large subunit (mt-LSU).</text>
</comment>
<comment type="subunit">
    <molecule>Isoform 3</molecule>
    <text evidence="7">Asociates with the mitochondrial ribosome small subunit (mt-SSU).</text>
</comment>
<comment type="interaction">
    <interactant intactId="EBI-2117080">
        <id>Q96I51</id>
    </interactant>
    <interactant intactId="EBI-399080">
        <id>Q92993</id>
        <label>KAT5</label>
    </interactant>
    <organismsDiffer>false</organismsDiffer>
    <experiments>3</experiments>
</comment>
<comment type="interaction">
    <interactant intactId="EBI-2117080">
        <id>Q96I51</id>
    </interactant>
    <interactant intactId="EBI-11742507">
        <id>Q8TAP4-4</id>
        <label>LMO3</label>
    </interactant>
    <organismsDiffer>false</organismsDiffer>
    <experiments>3</experiments>
</comment>
<comment type="interaction">
    <interactant intactId="EBI-2117080">
        <id>Q96I51</id>
    </interactant>
    <interactant intactId="EBI-3941531">
        <id>O75414</id>
        <label>NME6</label>
    </interactant>
    <organismsDiffer>false</organismsDiffer>
    <experiments>8</experiments>
</comment>
<comment type="interaction">
    <interactant intactId="EBI-2117080">
        <id>Q96I51</id>
    </interactant>
    <interactant intactId="EBI-9090795">
        <id>Q15047-2</id>
        <label>SETDB1</label>
    </interactant>
    <organismsDiffer>false</organismsDiffer>
    <experiments>3</experiments>
</comment>
<comment type="interaction">
    <interactant intactId="EBI-2117080">
        <id>Q96I51</id>
    </interactant>
    <interactant intactId="EBI-359832">
        <id>P61981</id>
        <label>YWHAG</label>
    </interactant>
    <organismsDiffer>false</organismsDiffer>
    <experiments>3</experiments>
</comment>
<comment type="subcellular location">
    <subcellularLocation>
        <location evidence="5 6">Mitochondrion membrane</location>
    </subcellularLocation>
</comment>
<comment type="subcellular location">
    <molecule>Isoform 1</molecule>
    <subcellularLocation>
        <location evidence="7">Mitochondrion inner membrane</location>
    </subcellularLocation>
</comment>
<comment type="subcellular location">
    <molecule>Isoform 2</molecule>
    <subcellularLocation>
        <location evidence="7">Mitochondrion inner membrane</location>
    </subcellularLocation>
</comment>
<comment type="subcellular location">
    <molecule>Isoform 3</molecule>
    <subcellularLocation>
        <location evidence="7">Mitochondrion inner membrane</location>
    </subcellularLocation>
</comment>
<comment type="alternative products">
    <event type="alternative splicing"/>
    <isoform>
        <id>Q96I51-1</id>
        <name>1</name>
        <name evidence="13">V1</name>
        <sequence type="displayed"/>
    </isoform>
    <isoform>
        <id>Q96I51-2</id>
        <name>2</name>
        <name evidence="13">V3</name>
        <sequence type="described" ref="VSP_055617 VSP_055618"/>
    </isoform>
    <isoform>
        <id>Q96I51-3</id>
        <name>3</name>
        <name evidence="13">V2</name>
        <sequence type="described" ref="VSP_055619"/>
    </isoform>
</comment>
<comment type="tissue specificity">
    <text evidence="3">Ubiquitous.</text>
</comment>
<comment type="domain">
    <text evidence="5">The RCC1-like repeats assemble into a circular seven-bladed beta propeller structure. Each blade is composed of four antiparallel beta-strands with loops between each strand.</text>
</comment>
<comment type="disease">
    <text evidence="14">WBSCR16 is located in the Williams-Beuren syndrome (WBS) critical region. WBS results from a hemizygous deletion of several genes on chromosome 7q11.23, thought to arise as a consequence of unequal crossing over between highly homologous low-copy repeat sequences flanking the deleted region. Haploinsufficiency of WBSCR16 may be the cause of certain cardiovascular and musculo-skeletal abnormalities observed in the disease.</text>
</comment>
<name>RCC1L_HUMAN</name>